<evidence type="ECO:0000255" key="1"/>
<evidence type="ECO:0000305" key="2"/>
<evidence type="ECO:0000312" key="3">
    <source>
        <dbReference type="HGNC" id="HGNC:53452"/>
    </source>
</evidence>
<name>SIM47_HUMAN</name>
<keyword id="KW-0472">Membrane</keyword>
<keyword id="KW-1185">Reference proteome</keyword>
<keyword id="KW-0812">Transmembrane</keyword>
<keyword id="KW-1133">Transmembrane helix</keyword>
<reference key="1">
    <citation type="submission" date="2009-09" db="EMBL/GenBank/DDBJ databases">
        <title>Study on a novel mRNA isolated from human spermatozoa.</title>
        <authorList>
            <person name="Xu W.J."/>
            <person name="Wang Z.X."/>
            <person name="Qiao Z.D."/>
        </authorList>
    </citation>
    <scope>NUCLEOTIDE SEQUENCE [MRNA]</scope>
</reference>
<reference key="2">
    <citation type="journal article" date="2004" name="Nature">
        <title>The DNA sequence and biology of human chromosome 19.</title>
        <authorList>
            <person name="Grimwood J."/>
            <person name="Gordon L.A."/>
            <person name="Olsen A.S."/>
            <person name="Terry A."/>
            <person name="Schmutz J."/>
            <person name="Lamerdin J.E."/>
            <person name="Hellsten U."/>
            <person name="Goodstein D."/>
            <person name="Couronne O."/>
            <person name="Tran-Gyamfi M."/>
            <person name="Aerts A."/>
            <person name="Altherr M."/>
            <person name="Ashworth L."/>
            <person name="Bajorek E."/>
            <person name="Black S."/>
            <person name="Branscomb E."/>
            <person name="Caenepeel S."/>
            <person name="Carrano A.V."/>
            <person name="Caoile C."/>
            <person name="Chan Y.M."/>
            <person name="Christensen M."/>
            <person name="Cleland C.A."/>
            <person name="Copeland A."/>
            <person name="Dalin E."/>
            <person name="Dehal P."/>
            <person name="Denys M."/>
            <person name="Detter J.C."/>
            <person name="Escobar J."/>
            <person name="Flowers D."/>
            <person name="Fotopulos D."/>
            <person name="Garcia C."/>
            <person name="Georgescu A.M."/>
            <person name="Glavina T."/>
            <person name="Gomez M."/>
            <person name="Gonzales E."/>
            <person name="Groza M."/>
            <person name="Hammon N."/>
            <person name="Hawkins T."/>
            <person name="Haydu L."/>
            <person name="Ho I."/>
            <person name="Huang W."/>
            <person name="Israni S."/>
            <person name="Jett J."/>
            <person name="Kadner K."/>
            <person name="Kimball H."/>
            <person name="Kobayashi A."/>
            <person name="Larionov V."/>
            <person name="Leem S.-H."/>
            <person name="Lopez F."/>
            <person name="Lou Y."/>
            <person name="Lowry S."/>
            <person name="Malfatti S."/>
            <person name="Martinez D."/>
            <person name="McCready P.M."/>
            <person name="Medina C."/>
            <person name="Morgan J."/>
            <person name="Nelson K."/>
            <person name="Nolan M."/>
            <person name="Ovcharenko I."/>
            <person name="Pitluck S."/>
            <person name="Pollard M."/>
            <person name="Popkie A.P."/>
            <person name="Predki P."/>
            <person name="Quan G."/>
            <person name="Ramirez L."/>
            <person name="Rash S."/>
            <person name="Retterer J."/>
            <person name="Rodriguez A."/>
            <person name="Rogers S."/>
            <person name="Salamov A."/>
            <person name="Salazar A."/>
            <person name="She X."/>
            <person name="Smith D."/>
            <person name="Slezak T."/>
            <person name="Solovyev V."/>
            <person name="Thayer N."/>
            <person name="Tice H."/>
            <person name="Tsai M."/>
            <person name="Ustaszewska A."/>
            <person name="Vo N."/>
            <person name="Wagner M."/>
            <person name="Wheeler J."/>
            <person name="Wu K."/>
            <person name="Xie G."/>
            <person name="Yang J."/>
            <person name="Dubchak I."/>
            <person name="Furey T.S."/>
            <person name="DeJong P."/>
            <person name="Dickson M."/>
            <person name="Gordon D."/>
            <person name="Eichler E.E."/>
            <person name="Pennacchio L.A."/>
            <person name="Richardson P."/>
            <person name="Stubbs L."/>
            <person name="Rokhsar D.S."/>
            <person name="Myers R.M."/>
            <person name="Rubin E.M."/>
            <person name="Lucas S.M."/>
        </authorList>
    </citation>
    <scope>NUCLEOTIDE SEQUENCE [LARGE SCALE GENOMIC DNA]</scope>
</reference>
<sequence length="28" mass="3285">MNFQENVTLAMALFTILTSIYFFNKAQQ</sequence>
<accession>D0EPY3</accession>
<dbReference type="EMBL" id="GQ868703">
    <property type="protein sequence ID" value="ACX48439.1"/>
    <property type="molecule type" value="mRNA"/>
</dbReference>
<dbReference type="EMBL" id="AC010325">
    <property type="status" value="NOT_ANNOTATED_CDS"/>
    <property type="molecule type" value="Genomic_DNA"/>
</dbReference>
<dbReference type="CCDS" id="CCDS92672.1"/>
<dbReference type="RefSeq" id="NP_001371526.1">
    <property type="nucleotide sequence ID" value="NM_001384597.1"/>
</dbReference>
<dbReference type="BioMuta" id="ENSG00000261341"/>
<dbReference type="Ensembl" id="ENST00000562076.2">
    <property type="protein sequence ID" value="ENSP00000489871.1"/>
    <property type="gene ID" value="ENSG00000261341.7"/>
</dbReference>
<dbReference type="Ensembl" id="ENST00000563228.5">
    <property type="protein sequence ID" value="ENSP00000489954.1"/>
    <property type="gene ID" value="ENSG00000261341.7"/>
</dbReference>
<dbReference type="GeneID" id="105372440"/>
<dbReference type="MANE-Select" id="ENST00000562076.2">
    <property type="protein sequence ID" value="ENSP00000489871.1"/>
    <property type="RefSeq nucleotide sequence ID" value="NM_001384597.1"/>
    <property type="RefSeq protein sequence ID" value="NP_001371526.1"/>
</dbReference>
<dbReference type="AGR" id="HGNC:53452"/>
<dbReference type="GeneCards" id="SMIM47"/>
<dbReference type="HGNC" id="HGNC:53452">
    <property type="gene designation" value="SMIM47"/>
</dbReference>
<dbReference type="VEuPathDB" id="HostDB:ENSG00000261341"/>
<dbReference type="GeneTree" id="ENSGT01040000240672"/>
<dbReference type="PRO" id="PR:D0EPY3"/>
<dbReference type="Proteomes" id="UP000005640">
    <property type="component" value="Chromosome 19"/>
</dbReference>
<dbReference type="Bgee" id="ENSG00000261341">
    <property type="expression patterns" value="Expressed in right testis and 97 other cell types or tissues"/>
</dbReference>
<dbReference type="ExpressionAtlas" id="D0EPY3">
    <property type="expression patterns" value="baseline and differential"/>
</dbReference>
<dbReference type="GO" id="GO:0016020">
    <property type="term" value="C:membrane"/>
    <property type="evidence" value="ECO:0007669"/>
    <property type="project" value="UniProtKB-SubCell"/>
</dbReference>
<organism>
    <name type="scientific">Homo sapiens</name>
    <name type="common">Human</name>
    <dbReference type="NCBI Taxonomy" id="9606"/>
    <lineage>
        <taxon>Eukaryota</taxon>
        <taxon>Metazoa</taxon>
        <taxon>Chordata</taxon>
        <taxon>Craniata</taxon>
        <taxon>Vertebrata</taxon>
        <taxon>Euteleostomi</taxon>
        <taxon>Mammalia</taxon>
        <taxon>Eutheria</taxon>
        <taxon>Euarchontoglires</taxon>
        <taxon>Primates</taxon>
        <taxon>Haplorrhini</taxon>
        <taxon>Catarrhini</taxon>
        <taxon>Hominidae</taxon>
        <taxon>Homo</taxon>
    </lineage>
</organism>
<protein>
    <recommendedName>
        <fullName evidence="2">Small integral membrane protein 47</fullName>
    </recommendedName>
</protein>
<feature type="chain" id="PRO_0000457384" description="Small integral membrane protein 47">
    <location>
        <begin position="1"/>
        <end position="28"/>
    </location>
</feature>
<feature type="transmembrane region" description="Helical" evidence="1">
    <location>
        <begin position="7"/>
        <end position="24"/>
    </location>
</feature>
<gene>
    <name evidence="3" type="primary">SMIM47</name>
</gene>
<proteinExistence type="inferred from homology"/>
<comment type="subcellular location">
    <subcellularLocation>
        <location evidence="1">Membrane</location>
        <topology evidence="1">Single-pass membrane protein</topology>
    </subcellularLocation>
</comment>